<name>RHBD2_MOUSE</name>
<accession>Q8VEK2</accession>
<accession>Q3TT71</accession>
<accession>Q4G0C4</accession>
<evidence type="ECO:0000255" key="1"/>
<evidence type="ECO:0000256" key="2">
    <source>
        <dbReference type="SAM" id="MobiDB-lite"/>
    </source>
</evidence>
<evidence type="ECO:0000269" key="3">
    <source>
    </source>
</evidence>
<evidence type="ECO:0000303" key="4">
    <source>
    </source>
</evidence>
<evidence type="ECO:0000305" key="5"/>
<comment type="subunit">
    <text evidence="3">Might form homotrimers; these trimers are only formed in retina.</text>
</comment>
<comment type="subcellular location">
    <subcellularLocation>
        <location evidence="3">Golgi apparatus</location>
        <location evidence="3">cis-Golgi network membrane</location>
        <topology evidence="3">Multi-pass membrane protein</topology>
    </subcellularLocation>
</comment>
<comment type="alternative products">
    <event type="alternative splicing"/>
    <isoform>
        <id>Q8VEK2-1</id>
        <name>1</name>
        <sequence type="displayed"/>
    </isoform>
    <isoform>
        <id>Q8VEK2-2</id>
        <name>2</name>
        <sequence type="described" ref="VSP_021249"/>
    </isoform>
</comment>
<comment type="tissue specificity">
    <text evidence="3">Widely expressed, including in retina and brain (at protein level), as well as in kidney, testis and ovary. Expressed in all layers of the retina, including inner segments of photoreceptor cells and ganglion cells (at protein level).</text>
</comment>
<comment type="developmental stage">
    <text evidence="3">In the developing eye, already detected at 10.5 dpc. Expression increases from 12.5 though 18.5 dpc in all retinal cells (at protein level). At P1, expressed in a small number of cells at the level of the ganglion cell layer and in the inner edge of the ventricular zone of the retina. The number of expressing cells increases and, by P8 to P11, entirely occupies the ganglion cell layer and inner nuclear layer. At that stage, not detected in the photoreceptor cell bodies of the outer nuclear layer. At P21, expressed in all nuclear layers of the retina, including cones (at protein level).</text>
</comment>
<comment type="similarity">
    <text evidence="5">Belongs to the peptidase S54 family.</text>
</comment>
<comment type="caution">
    <text evidence="5">Although strongly related to the peptidase S54 family, it lacks the conserved active sites, suggesting that it has no peptidase activity.</text>
</comment>
<sequence>MAAPGPASRFWCSCPEVPSATFFTALLSLLVSGPRLFLLQPPLAPSGLSLRSEALRNWQVYRLVTYIFVYENPVSLLCGAIIIWRFAGNFERTVGTVRHCFFTLIFTVFSAIIYLSFESVSSLSKLGEVEDARGFTPVAFAMLGVTSVRSRMRRALVFGVVVPSVLVPWLLLCASWLIPQTSFLSNVSGLLIGLSYGLTYCYSLDLSERVALKLDQKFPFSLMRRIPLFKYISGSSAERRAAQSRRLNPAPGSYPTQSCHPHLTPSYPVTQMQHASGQKLASWPPGHMPSLPPYQPASGLCYVQNHFGPNPNASSVYPASAGTSQGVQPPSPISCPGTVYSGALGTPGATGSKESSKVAMP</sequence>
<organism>
    <name type="scientific">Mus musculus</name>
    <name type="common">Mouse</name>
    <dbReference type="NCBI Taxonomy" id="10090"/>
    <lineage>
        <taxon>Eukaryota</taxon>
        <taxon>Metazoa</taxon>
        <taxon>Chordata</taxon>
        <taxon>Craniata</taxon>
        <taxon>Vertebrata</taxon>
        <taxon>Euteleostomi</taxon>
        <taxon>Mammalia</taxon>
        <taxon>Eutheria</taxon>
        <taxon>Euarchontoglires</taxon>
        <taxon>Glires</taxon>
        <taxon>Rodentia</taxon>
        <taxon>Myomorpha</taxon>
        <taxon>Muroidea</taxon>
        <taxon>Muridae</taxon>
        <taxon>Murinae</taxon>
        <taxon>Mus</taxon>
        <taxon>Mus</taxon>
    </lineage>
</organism>
<dbReference type="EMBL" id="AK041845">
    <property type="protein sequence ID" value="BAC31081.1"/>
    <property type="molecule type" value="mRNA"/>
</dbReference>
<dbReference type="EMBL" id="AK161545">
    <property type="protein sequence ID" value="BAE36454.1"/>
    <property type="molecule type" value="mRNA"/>
</dbReference>
<dbReference type="EMBL" id="AK165926">
    <property type="protein sequence ID" value="BAE38463.1"/>
    <property type="molecule type" value="mRNA"/>
</dbReference>
<dbReference type="EMBL" id="BC018360">
    <property type="protein sequence ID" value="AAH18360.1"/>
    <property type="molecule type" value="mRNA"/>
</dbReference>
<dbReference type="EMBL" id="BC098493">
    <property type="protein sequence ID" value="AAH98493.1"/>
    <property type="molecule type" value="mRNA"/>
</dbReference>
<dbReference type="CCDS" id="CCDS19743.1">
    <molecule id="Q8VEK2-1"/>
</dbReference>
<dbReference type="RefSeq" id="NP_666114.1">
    <molecule id="Q8VEK2-1"/>
    <property type="nucleotide sequence ID" value="NM_146002.2"/>
</dbReference>
<dbReference type="BioGRID" id="229600">
    <property type="interactions" value="2"/>
</dbReference>
<dbReference type="FunCoup" id="Q8VEK2">
    <property type="interactions" value="954"/>
</dbReference>
<dbReference type="STRING" id="10090.ENSMUSP00000049060"/>
<dbReference type="MEROPS" id="S54.955"/>
<dbReference type="GlyGen" id="Q8VEK2">
    <property type="glycosylation" value="1 site"/>
</dbReference>
<dbReference type="PhosphoSitePlus" id="Q8VEK2"/>
<dbReference type="SwissPalm" id="Q8VEK2"/>
<dbReference type="PaxDb" id="10090-ENSMUSP00000049060"/>
<dbReference type="ProteomicsDB" id="255325">
    <molecule id="Q8VEK2-1"/>
</dbReference>
<dbReference type="ProteomicsDB" id="255326">
    <molecule id="Q8VEK2-2"/>
</dbReference>
<dbReference type="Antibodypedia" id="48862">
    <property type="antibodies" value="41 antibodies from 18 providers"/>
</dbReference>
<dbReference type="DNASU" id="215160"/>
<dbReference type="Ensembl" id="ENSMUST00000043707.7">
    <molecule id="Q8VEK2-1"/>
    <property type="protein sequence ID" value="ENSMUSP00000049060.7"/>
    <property type="gene ID" value="ENSMUSG00000039917.11"/>
</dbReference>
<dbReference type="GeneID" id="215160"/>
<dbReference type="KEGG" id="mmu:215160"/>
<dbReference type="UCSC" id="uc008zyr.1">
    <molecule id="Q8VEK2-1"/>
    <property type="organism name" value="mouse"/>
</dbReference>
<dbReference type="AGR" id="MGI:1915612"/>
<dbReference type="CTD" id="57414"/>
<dbReference type="MGI" id="MGI:1915612">
    <property type="gene designation" value="Rhbdd2"/>
</dbReference>
<dbReference type="VEuPathDB" id="HostDB:ENSMUSG00000039917"/>
<dbReference type="eggNOG" id="KOG2632">
    <property type="taxonomic scope" value="Eukaryota"/>
</dbReference>
<dbReference type="GeneTree" id="ENSGT00390000000699"/>
<dbReference type="HOGENOM" id="CLU_064872_1_0_1"/>
<dbReference type="InParanoid" id="Q8VEK2"/>
<dbReference type="OMA" id="GAVIIWR"/>
<dbReference type="OrthoDB" id="10257275at2759"/>
<dbReference type="PhylomeDB" id="Q8VEK2"/>
<dbReference type="TreeFam" id="TF335461"/>
<dbReference type="BioGRID-ORCS" id="215160">
    <property type="hits" value="7 hits in 77 CRISPR screens"/>
</dbReference>
<dbReference type="PRO" id="PR:Q8VEK2"/>
<dbReference type="Proteomes" id="UP000000589">
    <property type="component" value="Chromosome 5"/>
</dbReference>
<dbReference type="RNAct" id="Q8VEK2">
    <property type="molecule type" value="protein"/>
</dbReference>
<dbReference type="Bgee" id="ENSMUSG00000039917">
    <property type="expression patterns" value="Expressed in superior frontal gyrus and 203 other cell types or tissues"/>
</dbReference>
<dbReference type="ExpressionAtlas" id="Q8VEK2">
    <property type="expression patterns" value="baseline and differential"/>
</dbReference>
<dbReference type="GO" id="GO:0005794">
    <property type="term" value="C:Golgi apparatus"/>
    <property type="evidence" value="ECO:0000314"/>
    <property type="project" value="MGI"/>
</dbReference>
<dbReference type="GO" id="GO:0000139">
    <property type="term" value="C:Golgi membrane"/>
    <property type="evidence" value="ECO:0000314"/>
    <property type="project" value="MGI"/>
</dbReference>
<dbReference type="GO" id="GO:0005654">
    <property type="term" value="C:nucleoplasm"/>
    <property type="evidence" value="ECO:0007669"/>
    <property type="project" value="Ensembl"/>
</dbReference>
<dbReference type="GO" id="GO:0048471">
    <property type="term" value="C:perinuclear region of cytoplasm"/>
    <property type="evidence" value="ECO:0000314"/>
    <property type="project" value="MGI"/>
</dbReference>
<dbReference type="GO" id="GO:0004252">
    <property type="term" value="F:serine-type endopeptidase activity"/>
    <property type="evidence" value="ECO:0007669"/>
    <property type="project" value="InterPro"/>
</dbReference>
<dbReference type="FunFam" id="1.20.1540.10:FF:000011">
    <property type="entry name" value="Putative rhomboid domain-containing protein 2"/>
    <property type="match status" value="1"/>
</dbReference>
<dbReference type="Gene3D" id="1.20.1540.10">
    <property type="entry name" value="Rhomboid-like"/>
    <property type="match status" value="1"/>
</dbReference>
<dbReference type="InterPro" id="IPR022764">
    <property type="entry name" value="Peptidase_S54_rhomboid_dom"/>
</dbReference>
<dbReference type="InterPro" id="IPR035952">
    <property type="entry name" value="Rhomboid-like_sf"/>
</dbReference>
<dbReference type="PANTHER" id="PTHR11009">
    <property type="entry name" value="DER1-LIKE PROTEIN, DERLIN"/>
    <property type="match status" value="1"/>
</dbReference>
<dbReference type="Pfam" id="PF01694">
    <property type="entry name" value="Rhomboid"/>
    <property type="match status" value="1"/>
</dbReference>
<dbReference type="SUPFAM" id="SSF144091">
    <property type="entry name" value="Rhomboid-like"/>
    <property type="match status" value="1"/>
</dbReference>
<reference key="1">
    <citation type="journal article" date="2005" name="Science">
        <title>The transcriptional landscape of the mammalian genome.</title>
        <authorList>
            <person name="Carninci P."/>
            <person name="Kasukawa T."/>
            <person name="Katayama S."/>
            <person name="Gough J."/>
            <person name="Frith M.C."/>
            <person name="Maeda N."/>
            <person name="Oyama R."/>
            <person name="Ravasi T."/>
            <person name="Lenhard B."/>
            <person name="Wells C."/>
            <person name="Kodzius R."/>
            <person name="Shimokawa K."/>
            <person name="Bajic V.B."/>
            <person name="Brenner S.E."/>
            <person name="Batalov S."/>
            <person name="Forrest A.R."/>
            <person name="Zavolan M."/>
            <person name="Davis M.J."/>
            <person name="Wilming L.G."/>
            <person name="Aidinis V."/>
            <person name="Allen J.E."/>
            <person name="Ambesi-Impiombato A."/>
            <person name="Apweiler R."/>
            <person name="Aturaliya R.N."/>
            <person name="Bailey T.L."/>
            <person name="Bansal M."/>
            <person name="Baxter L."/>
            <person name="Beisel K.W."/>
            <person name="Bersano T."/>
            <person name="Bono H."/>
            <person name="Chalk A.M."/>
            <person name="Chiu K.P."/>
            <person name="Choudhary V."/>
            <person name="Christoffels A."/>
            <person name="Clutterbuck D.R."/>
            <person name="Crowe M.L."/>
            <person name="Dalla E."/>
            <person name="Dalrymple B.P."/>
            <person name="de Bono B."/>
            <person name="Della Gatta G."/>
            <person name="di Bernardo D."/>
            <person name="Down T."/>
            <person name="Engstrom P."/>
            <person name="Fagiolini M."/>
            <person name="Faulkner G."/>
            <person name="Fletcher C.F."/>
            <person name="Fukushima T."/>
            <person name="Furuno M."/>
            <person name="Futaki S."/>
            <person name="Gariboldi M."/>
            <person name="Georgii-Hemming P."/>
            <person name="Gingeras T.R."/>
            <person name="Gojobori T."/>
            <person name="Green R.E."/>
            <person name="Gustincich S."/>
            <person name="Harbers M."/>
            <person name="Hayashi Y."/>
            <person name="Hensch T.K."/>
            <person name="Hirokawa N."/>
            <person name="Hill D."/>
            <person name="Huminiecki L."/>
            <person name="Iacono M."/>
            <person name="Ikeo K."/>
            <person name="Iwama A."/>
            <person name="Ishikawa T."/>
            <person name="Jakt M."/>
            <person name="Kanapin A."/>
            <person name="Katoh M."/>
            <person name="Kawasawa Y."/>
            <person name="Kelso J."/>
            <person name="Kitamura H."/>
            <person name="Kitano H."/>
            <person name="Kollias G."/>
            <person name="Krishnan S.P."/>
            <person name="Kruger A."/>
            <person name="Kummerfeld S.K."/>
            <person name="Kurochkin I.V."/>
            <person name="Lareau L.F."/>
            <person name="Lazarevic D."/>
            <person name="Lipovich L."/>
            <person name="Liu J."/>
            <person name="Liuni S."/>
            <person name="McWilliam S."/>
            <person name="Madan Babu M."/>
            <person name="Madera M."/>
            <person name="Marchionni L."/>
            <person name="Matsuda H."/>
            <person name="Matsuzawa S."/>
            <person name="Miki H."/>
            <person name="Mignone F."/>
            <person name="Miyake S."/>
            <person name="Morris K."/>
            <person name="Mottagui-Tabar S."/>
            <person name="Mulder N."/>
            <person name="Nakano N."/>
            <person name="Nakauchi H."/>
            <person name="Ng P."/>
            <person name="Nilsson R."/>
            <person name="Nishiguchi S."/>
            <person name="Nishikawa S."/>
            <person name="Nori F."/>
            <person name="Ohara O."/>
            <person name="Okazaki Y."/>
            <person name="Orlando V."/>
            <person name="Pang K.C."/>
            <person name="Pavan W.J."/>
            <person name="Pavesi G."/>
            <person name="Pesole G."/>
            <person name="Petrovsky N."/>
            <person name="Piazza S."/>
            <person name="Reed J."/>
            <person name="Reid J.F."/>
            <person name="Ring B.Z."/>
            <person name="Ringwald M."/>
            <person name="Rost B."/>
            <person name="Ruan Y."/>
            <person name="Salzberg S.L."/>
            <person name="Sandelin A."/>
            <person name="Schneider C."/>
            <person name="Schoenbach C."/>
            <person name="Sekiguchi K."/>
            <person name="Semple C.A."/>
            <person name="Seno S."/>
            <person name="Sessa L."/>
            <person name="Sheng Y."/>
            <person name="Shibata Y."/>
            <person name="Shimada H."/>
            <person name="Shimada K."/>
            <person name="Silva D."/>
            <person name="Sinclair B."/>
            <person name="Sperling S."/>
            <person name="Stupka E."/>
            <person name="Sugiura K."/>
            <person name="Sultana R."/>
            <person name="Takenaka Y."/>
            <person name="Taki K."/>
            <person name="Tammoja K."/>
            <person name="Tan S.L."/>
            <person name="Tang S."/>
            <person name="Taylor M.S."/>
            <person name="Tegner J."/>
            <person name="Teichmann S.A."/>
            <person name="Ueda H.R."/>
            <person name="van Nimwegen E."/>
            <person name="Verardo R."/>
            <person name="Wei C.L."/>
            <person name="Yagi K."/>
            <person name="Yamanishi H."/>
            <person name="Zabarovsky E."/>
            <person name="Zhu S."/>
            <person name="Zimmer A."/>
            <person name="Hide W."/>
            <person name="Bult C."/>
            <person name="Grimmond S.M."/>
            <person name="Teasdale R.D."/>
            <person name="Liu E.T."/>
            <person name="Brusic V."/>
            <person name="Quackenbush J."/>
            <person name="Wahlestedt C."/>
            <person name="Mattick J.S."/>
            <person name="Hume D.A."/>
            <person name="Kai C."/>
            <person name="Sasaki D."/>
            <person name="Tomaru Y."/>
            <person name="Fukuda S."/>
            <person name="Kanamori-Katayama M."/>
            <person name="Suzuki M."/>
            <person name="Aoki J."/>
            <person name="Arakawa T."/>
            <person name="Iida J."/>
            <person name="Imamura K."/>
            <person name="Itoh M."/>
            <person name="Kato T."/>
            <person name="Kawaji H."/>
            <person name="Kawagashira N."/>
            <person name="Kawashima T."/>
            <person name="Kojima M."/>
            <person name="Kondo S."/>
            <person name="Konno H."/>
            <person name="Nakano K."/>
            <person name="Ninomiya N."/>
            <person name="Nishio T."/>
            <person name="Okada M."/>
            <person name="Plessy C."/>
            <person name="Shibata K."/>
            <person name="Shiraki T."/>
            <person name="Suzuki S."/>
            <person name="Tagami M."/>
            <person name="Waki K."/>
            <person name="Watahiki A."/>
            <person name="Okamura-Oho Y."/>
            <person name="Suzuki H."/>
            <person name="Kawai J."/>
            <person name="Hayashizaki Y."/>
        </authorList>
    </citation>
    <scope>NUCLEOTIDE SEQUENCE [LARGE SCALE MRNA] (ISOFORMS 1 AND 2)</scope>
    <source>
        <strain>C57BL/6J</strain>
        <tissue>Lung</tissue>
        <tissue>Pituitary</tissue>
        <tissue>Thymus</tissue>
    </source>
</reference>
<reference key="2">
    <citation type="journal article" date="2004" name="Genome Res.">
        <title>The status, quality, and expansion of the NIH full-length cDNA project: the Mammalian Gene Collection (MGC).</title>
        <authorList>
            <consortium name="The MGC Project Team"/>
        </authorList>
    </citation>
    <scope>NUCLEOTIDE SEQUENCE [LARGE SCALE MRNA] (ISOFORM 1)</scope>
    <source>
        <strain>FVB/N</strain>
        <tissue>Mammary tumor</tissue>
    </source>
</reference>
<reference key="3">
    <citation type="journal article" date="2013" name="J. Biol. Chem.">
        <title>Dynamics of the rhomboid-like protein RHBDD2 expression in mouse retina and involvement of its human ortholog in retinitis pigmentosa.</title>
        <authorList>
            <person name="Ahmedli N.B."/>
            <person name="Gribanova Y."/>
            <person name="Njoku C.C."/>
            <person name="Naidu A."/>
            <person name="Young A."/>
            <person name="Mendoza E."/>
            <person name="Yamashita C.K."/>
            <person name="Ozgul R.K."/>
            <person name="Johnson J.E."/>
            <person name="Fox D.A."/>
            <person name="Farber D.B."/>
        </authorList>
    </citation>
    <scope>SUBUNIT</scope>
    <scope>SUBCELLULAR LOCATION</scope>
    <scope>TISSUE SPECIFICITY</scope>
    <scope>DEVELOPMENTAL STAGE</scope>
    <scope>MUTAGENESIS OF SER-185; GLY-189; GLY-193 AND GLY-197</scope>
</reference>
<feature type="chain" id="PRO_0000254597" description="Rhomboid domain-containing protein 2">
    <location>
        <begin position="1"/>
        <end position="361"/>
    </location>
</feature>
<feature type="transmembrane region" description="Helical" evidence="1">
    <location>
        <begin position="19"/>
        <end position="39"/>
    </location>
</feature>
<feature type="transmembrane region" description="Helical" evidence="1">
    <location>
        <begin position="63"/>
        <end position="83"/>
    </location>
</feature>
<feature type="transmembrane region" description="Helical" evidence="1">
    <location>
        <begin position="100"/>
        <end position="120"/>
    </location>
</feature>
<feature type="transmembrane region" description="Helical" evidence="1">
    <location>
        <begin position="158"/>
        <end position="178"/>
    </location>
</feature>
<feature type="transmembrane region" description="Helical" evidence="1">
    <location>
        <begin position="182"/>
        <end position="202"/>
    </location>
</feature>
<feature type="region of interest" description="Disordered" evidence="2">
    <location>
        <begin position="265"/>
        <end position="287"/>
    </location>
</feature>
<feature type="region of interest" description="Disordered" evidence="2">
    <location>
        <begin position="318"/>
        <end position="361"/>
    </location>
</feature>
<feature type="compositionally biased region" description="Polar residues" evidence="2">
    <location>
        <begin position="267"/>
        <end position="276"/>
    </location>
</feature>
<feature type="compositionally biased region" description="Polar residues" evidence="2">
    <location>
        <begin position="318"/>
        <end position="328"/>
    </location>
</feature>
<feature type="splice variant" id="VSP_021249" description="In isoform 2." evidence="4">
    <location>
        <begin position="1"/>
        <end position="222"/>
    </location>
</feature>
<feature type="mutagenesis site" description="No effect on cis-Golgi localization." evidence="3">
    <original>S</original>
    <variation>L</variation>
    <location>
        <position position="185"/>
    </location>
</feature>
<feature type="mutagenesis site" description="Loss of cis-Golgi localization." evidence="3">
    <original>G</original>
    <variation>L</variation>
    <location>
        <position position="189"/>
    </location>
</feature>
<feature type="mutagenesis site" description="Loss of cis-Golgi localization." evidence="3">
    <original>G</original>
    <variation>L</variation>
    <location>
        <position position="193"/>
    </location>
</feature>
<feature type="mutagenesis site" description="No effect on cis-Golgi localization." evidence="3">
    <original>G</original>
    <variation>L</variation>
    <location>
        <position position="197"/>
    </location>
</feature>
<feature type="sequence conflict" description="In Ref. 2; AAH98493." evidence="5" ref="2">
    <original>E</original>
    <variation>K</variation>
    <location>
        <position position="238"/>
    </location>
</feature>
<protein>
    <recommendedName>
        <fullName>Rhomboid domain-containing protein 2</fullName>
    </recommendedName>
    <alternativeName>
        <fullName>Rhomboid-like protein 7</fullName>
    </alternativeName>
</protein>
<keyword id="KW-0025">Alternative splicing</keyword>
<keyword id="KW-0333">Golgi apparatus</keyword>
<keyword id="KW-0472">Membrane</keyword>
<keyword id="KW-1185">Reference proteome</keyword>
<keyword id="KW-0812">Transmembrane</keyword>
<keyword id="KW-1133">Transmembrane helix</keyword>
<gene>
    <name type="primary">Rhbdd2</name>
    <name type="synonym">Rhbdl7</name>
</gene>
<proteinExistence type="evidence at protein level"/>